<evidence type="ECO:0000250" key="1"/>
<evidence type="ECO:0000255" key="2">
    <source>
        <dbReference type="HAMAP-Rule" id="MF_01350"/>
    </source>
</evidence>
<protein>
    <recommendedName>
        <fullName evidence="2">NAD(P)H-quinone oxidoreductase subunit 1, chloroplastic</fullName>
        <ecNumber evidence="2">7.1.1.-</ecNumber>
    </recommendedName>
    <alternativeName>
        <fullName evidence="2">NAD(P)H dehydrogenase subunit 1</fullName>
        <shortName evidence="2">NDH subunit 1</shortName>
    </alternativeName>
    <alternativeName>
        <fullName evidence="2">NADH-plastoquinone oxidoreductase subunit 1</fullName>
    </alternativeName>
</protein>
<reference key="1">
    <citation type="journal article" date="2004" name="DNA Res.">
        <title>Complete nucleotide sequence of the sugarcane (Saccharum officinarum) chloroplast genome: a comparative analysis of four monocot chloroplast genomes.</title>
        <authorList>
            <person name="Asano T."/>
            <person name="Tsudzuki T."/>
            <person name="Takahashi S."/>
            <person name="Shimada H."/>
            <person name="Kadowaki K."/>
        </authorList>
    </citation>
    <scope>NUCLEOTIDE SEQUENCE [LARGE SCALE GENOMIC DNA]</scope>
</reference>
<feature type="chain" id="PRO_0000226941" description="NAD(P)H-quinone oxidoreductase subunit 1, chloroplastic">
    <location>
        <begin position="1"/>
        <end position="362"/>
    </location>
</feature>
<feature type="transmembrane region" description="Helical" evidence="2">
    <location>
        <begin position="27"/>
        <end position="47"/>
    </location>
</feature>
<feature type="transmembrane region" description="Helical" evidence="2">
    <location>
        <begin position="103"/>
        <end position="123"/>
    </location>
</feature>
<feature type="transmembrane region" description="Helical" evidence="2">
    <location>
        <begin position="128"/>
        <end position="148"/>
    </location>
</feature>
<feature type="transmembrane region" description="Helical" evidence="2">
    <location>
        <begin position="164"/>
        <end position="184"/>
    </location>
</feature>
<feature type="transmembrane region" description="Helical" evidence="2">
    <location>
        <begin position="202"/>
        <end position="222"/>
    </location>
</feature>
<feature type="transmembrane region" description="Helical" evidence="2">
    <location>
        <begin position="247"/>
        <end position="267"/>
    </location>
</feature>
<feature type="transmembrane region" description="Helical" evidence="2">
    <location>
        <begin position="303"/>
        <end position="323"/>
    </location>
</feature>
<feature type="transmembrane region" description="Helical" evidence="2">
    <location>
        <begin position="335"/>
        <end position="355"/>
    </location>
</feature>
<geneLocation type="chloroplast"/>
<sequence length="362" mass="40438">MIIDRVEVETINSFSKLELLKEIYGLIWILPILALLLGITIEVLVIVWLEREISASIQQRIGPEYAGPLGLLQAIADGTKLLLKEDILPSRGEIPLFSIGPSIAVISILLSFLVIPLGYHFVLADLSIGVFLWIAISSIAPIGLLMAGYSSNNKYSFLGGLRAAAQSISYEIPLTFCVLAISLLSNSLSTVDIVEAQSKYGFFGWNLWRQPIGFLVFLISSLAECERLPFDLPEAEEELVAGYQTEYSGIKYGLFYLVSYLNLLVSSLFVTVLYLGGWNFSIPYISFFGFFQMNKIIGILEMVIGIFITLTKAYLFLFISITIRWTLPRMRMDQLLNLGWKFLLPISLGNLLLTTSFQLVSL</sequence>
<dbReference type="EC" id="7.1.1.-" evidence="2"/>
<dbReference type="EMBL" id="AP006714">
    <property type="protein sequence ID" value="BAD27364.1"/>
    <property type="molecule type" value="Genomic_DNA"/>
</dbReference>
<dbReference type="SMR" id="Q6ENP2"/>
<dbReference type="GO" id="GO:0009535">
    <property type="term" value="C:chloroplast thylakoid membrane"/>
    <property type="evidence" value="ECO:0007669"/>
    <property type="project" value="UniProtKB-SubCell"/>
</dbReference>
<dbReference type="GO" id="GO:0003954">
    <property type="term" value="F:NADH dehydrogenase activity"/>
    <property type="evidence" value="ECO:0007669"/>
    <property type="project" value="TreeGrafter"/>
</dbReference>
<dbReference type="GO" id="GO:0016655">
    <property type="term" value="F:oxidoreductase activity, acting on NAD(P)H, quinone or similar compound as acceptor"/>
    <property type="evidence" value="ECO:0007669"/>
    <property type="project" value="UniProtKB-UniRule"/>
</dbReference>
<dbReference type="GO" id="GO:0048038">
    <property type="term" value="F:quinone binding"/>
    <property type="evidence" value="ECO:0007669"/>
    <property type="project" value="UniProtKB-KW"/>
</dbReference>
<dbReference type="GO" id="GO:0009060">
    <property type="term" value="P:aerobic respiration"/>
    <property type="evidence" value="ECO:0007669"/>
    <property type="project" value="TreeGrafter"/>
</dbReference>
<dbReference type="GO" id="GO:0019684">
    <property type="term" value="P:photosynthesis, light reaction"/>
    <property type="evidence" value="ECO:0007669"/>
    <property type="project" value="UniProtKB-UniRule"/>
</dbReference>
<dbReference type="HAMAP" id="MF_01350">
    <property type="entry name" value="NDH1_NuoH"/>
    <property type="match status" value="1"/>
</dbReference>
<dbReference type="InterPro" id="IPR001694">
    <property type="entry name" value="NADH_UbQ_OxRdtase_su1/FPO"/>
</dbReference>
<dbReference type="InterPro" id="IPR018086">
    <property type="entry name" value="NADH_UbQ_OxRdtase_su1_CS"/>
</dbReference>
<dbReference type="NCBIfam" id="NF004741">
    <property type="entry name" value="PRK06076.1-2"/>
    <property type="match status" value="1"/>
</dbReference>
<dbReference type="PANTHER" id="PTHR11432">
    <property type="entry name" value="NADH DEHYDROGENASE SUBUNIT 1"/>
    <property type="match status" value="1"/>
</dbReference>
<dbReference type="PANTHER" id="PTHR11432:SF3">
    <property type="entry name" value="NADH-UBIQUINONE OXIDOREDUCTASE CHAIN 1"/>
    <property type="match status" value="1"/>
</dbReference>
<dbReference type="Pfam" id="PF00146">
    <property type="entry name" value="NADHdh"/>
    <property type="match status" value="1"/>
</dbReference>
<dbReference type="PROSITE" id="PS00667">
    <property type="entry name" value="COMPLEX1_ND1_1"/>
    <property type="match status" value="1"/>
</dbReference>
<dbReference type="PROSITE" id="PS00668">
    <property type="entry name" value="COMPLEX1_ND1_2"/>
    <property type="match status" value="1"/>
</dbReference>
<keyword id="KW-0150">Chloroplast</keyword>
<keyword id="KW-0472">Membrane</keyword>
<keyword id="KW-0520">NAD</keyword>
<keyword id="KW-0521">NADP</keyword>
<keyword id="KW-0934">Plastid</keyword>
<keyword id="KW-0618">Plastoquinone</keyword>
<keyword id="KW-0874">Quinone</keyword>
<keyword id="KW-0691">RNA editing</keyword>
<keyword id="KW-0793">Thylakoid</keyword>
<keyword id="KW-1278">Translocase</keyword>
<keyword id="KW-0812">Transmembrane</keyword>
<keyword id="KW-1133">Transmembrane helix</keyword>
<name>NU1C_SACOF</name>
<gene>
    <name evidence="2" type="primary">ndhA</name>
</gene>
<proteinExistence type="inferred from homology"/>
<organism>
    <name type="scientific">Saccharum officinarum</name>
    <name type="common">Sugarcane</name>
    <dbReference type="NCBI Taxonomy" id="4547"/>
    <lineage>
        <taxon>Eukaryota</taxon>
        <taxon>Viridiplantae</taxon>
        <taxon>Streptophyta</taxon>
        <taxon>Embryophyta</taxon>
        <taxon>Tracheophyta</taxon>
        <taxon>Spermatophyta</taxon>
        <taxon>Magnoliopsida</taxon>
        <taxon>Liliopsida</taxon>
        <taxon>Poales</taxon>
        <taxon>Poaceae</taxon>
        <taxon>PACMAD clade</taxon>
        <taxon>Panicoideae</taxon>
        <taxon>Andropogonodae</taxon>
        <taxon>Andropogoneae</taxon>
        <taxon>Saccharinae</taxon>
        <taxon>Saccharum</taxon>
        <taxon>Saccharum officinarum species complex</taxon>
    </lineage>
</organism>
<accession>Q6ENP2</accession>
<comment type="function">
    <text evidence="2">NDH shuttles electrons from NAD(P)H:plastoquinone, via FMN and iron-sulfur (Fe-S) centers, to quinones in the photosynthetic chain and possibly in a chloroplast respiratory chain. The immediate electron acceptor for the enzyme in this species is believed to be plastoquinone. Couples the redox reaction to proton translocation, and thus conserves the redox energy in a proton gradient.</text>
</comment>
<comment type="catalytic activity">
    <reaction evidence="2">
        <text>a plastoquinone + NADH + (n+1) H(+)(in) = a plastoquinol + NAD(+) + n H(+)(out)</text>
        <dbReference type="Rhea" id="RHEA:42608"/>
        <dbReference type="Rhea" id="RHEA-COMP:9561"/>
        <dbReference type="Rhea" id="RHEA-COMP:9562"/>
        <dbReference type="ChEBI" id="CHEBI:15378"/>
        <dbReference type="ChEBI" id="CHEBI:17757"/>
        <dbReference type="ChEBI" id="CHEBI:57540"/>
        <dbReference type="ChEBI" id="CHEBI:57945"/>
        <dbReference type="ChEBI" id="CHEBI:62192"/>
    </reaction>
</comment>
<comment type="catalytic activity">
    <reaction evidence="2">
        <text>a plastoquinone + NADPH + (n+1) H(+)(in) = a plastoquinol + NADP(+) + n H(+)(out)</text>
        <dbReference type="Rhea" id="RHEA:42612"/>
        <dbReference type="Rhea" id="RHEA-COMP:9561"/>
        <dbReference type="Rhea" id="RHEA-COMP:9562"/>
        <dbReference type="ChEBI" id="CHEBI:15378"/>
        <dbReference type="ChEBI" id="CHEBI:17757"/>
        <dbReference type="ChEBI" id="CHEBI:57783"/>
        <dbReference type="ChEBI" id="CHEBI:58349"/>
        <dbReference type="ChEBI" id="CHEBI:62192"/>
    </reaction>
</comment>
<comment type="subunit">
    <text evidence="2">NDH is composed of at least 16 different subunits, 5 of which are encoded in the nucleus.</text>
</comment>
<comment type="subcellular location">
    <subcellularLocation>
        <location evidence="2">Plastid</location>
        <location evidence="2">Chloroplast thylakoid membrane</location>
        <topology evidence="2">Multi-pass membrane protein</topology>
    </subcellularLocation>
</comment>
<comment type="RNA editing">
    <location>
        <position position="17" evidence="1"/>
    </location>
    <location>
        <position position="158" evidence="1"/>
    </location>
    <location>
        <position position="188" evidence="1"/>
    </location>
    <location>
        <position position="357" evidence="1"/>
    </location>
</comment>
<comment type="similarity">
    <text evidence="2">Belongs to the complex I subunit 1 family.</text>
</comment>